<sequence length="570" mass="65847">MKESPLITLVKRHSETHFANIKYGYYVLIISLVYLIGLALLRAFGRRTPSRSSSAFKNKIIYRLYDIDPAIHLGILFFAVLIPFYYHYSLTTQSTVYLKRLGRLSYALIPLNLFLTLRPNWFLRKNCTYTDFIPFHKWFSRIITVIGLLHGIFFIIKWAIDDNVSLKQKLILKTFNFVGFIISILVLFLLICSIGPMRRYNYRLFYIVHNLVNVAFILLTPIHSRPGVKFPFLLLNCTLLFIHIINRIVFAKSLMILNKNANYSKTNLVHVRLPRAILPDYFEPGSHIRISPYRRINPLYWLLPSHPYTIASLAEDNSIDLIIKETSTAEPGSQIESLRSNPKSFHLDQEKTYTLINSYPPSVPEECYSQGTNIAIICGGSGISFALPLFRHFFNKENVKYLKMIWLIKNYSEYELVLDYLKTNGLTFEKKPSNNKRISVFISGEYTAETRLDEITTNIDDENSEYEMGSFNNEDEDLSISNFNSENADSNDKTPETSHSPTKENGSLIEVKSKHSFTLSNELKSFNNESAQVNQNETWLFSCGPPSLLQLSKKYCNDERINFVCETYGL</sequence>
<keyword id="KW-0249">Electron transport</keyword>
<keyword id="KW-0274">FAD</keyword>
<keyword id="KW-0285">Flavoprotein</keyword>
<keyword id="KW-0406">Ion transport</keyword>
<keyword id="KW-0472">Membrane</keyword>
<keyword id="KW-0521">NADP</keyword>
<keyword id="KW-0560">Oxidoreductase</keyword>
<keyword id="KW-0812">Transmembrane</keyword>
<keyword id="KW-1133">Transmembrane helix</keyword>
<keyword id="KW-0813">Transport</keyword>
<protein>
    <recommendedName>
        <fullName>Probable metalloreductase AIM14</fullName>
        <ecNumber>1.16.1.-</ecNumber>
    </recommendedName>
    <alternativeName>
        <fullName>Altered inheritance of mitochondria protein 14</fullName>
    </alternativeName>
</protein>
<comment type="function">
    <text evidence="1">Probable cell surface metalloreductase. May be involved in iron or copper homeostasis (By similarity).</text>
</comment>
<comment type="subunit">
    <text evidence="1">Interacts with ribosomes.</text>
</comment>
<comment type="subcellular location">
    <subcellularLocation>
        <location evidence="1">Membrane</location>
        <topology>Multi-pass membrane protein</topology>
    </subcellularLocation>
</comment>
<comment type="similarity">
    <text evidence="4">Belongs to the ferric reductase (FRE) family. AIM14 subfamily.</text>
</comment>
<feature type="chain" id="PRO_0000408752" description="Probable metalloreductase AIM14">
    <location>
        <begin position="1"/>
        <end position="570"/>
    </location>
</feature>
<feature type="transmembrane region" description="Helical" evidence="2">
    <location>
        <begin position="21"/>
        <end position="41"/>
    </location>
</feature>
<feature type="transmembrane region" description="Helical" evidence="2">
    <location>
        <begin position="70"/>
        <end position="90"/>
    </location>
</feature>
<feature type="transmembrane region" description="Helical" evidence="2">
    <location>
        <begin position="101"/>
        <end position="118"/>
    </location>
</feature>
<feature type="transmembrane region" description="Helical" evidence="2">
    <location>
        <begin position="142"/>
        <end position="162"/>
    </location>
</feature>
<feature type="transmembrane region" description="Helical" evidence="2">
    <location>
        <begin position="177"/>
        <end position="197"/>
    </location>
</feature>
<feature type="transmembrane region" description="Helical" evidence="2">
    <location>
        <begin position="204"/>
        <end position="224"/>
    </location>
</feature>
<feature type="transmembrane region" description="Helical" evidence="2">
    <location>
        <begin position="230"/>
        <end position="250"/>
    </location>
</feature>
<feature type="domain" description="Ferric oxidoreductase">
    <location>
        <begin position="101"/>
        <end position="219"/>
    </location>
</feature>
<feature type="domain" description="FAD-binding FR-type">
    <location>
        <begin position="250"/>
        <end position="388"/>
    </location>
</feature>
<feature type="region of interest" description="Disordered" evidence="3">
    <location>
        <begin position="480"/>
        <end position="507"/>
    </location>
</feature>
<dbReference type="EC" id="1.16.1.-"/>
<dbReference type="EMBL" id="ACFL01000090">
    <property type="protein sequence ID" value="EEU07220.1"/>
    <property type="molecule type" value="Genomic_DNA"/>
</dbReference>
<dbReference type="Proteomes" id="UP000008073">
    <property type="component" value="Unassembled WGS sequence"/>
</dbReference>
<dbReference type="GO" id="GO:0005886">
    <property type="term" value="C:plasma membrane"/>
    <property type="evidence" value="ECO:0007669"/>
    <property type="project" value="TreeGrafter"/>
</dbReference>
<dbReference type="GO" id="GO:0000293">
    <property type="term" value="F:ferric-chelate reductase activity"/>
    <property type="evidence" value="ECO:0007669"/>
    <property type="project" value="TreeGrafter"/>
</dbReference>
<dbReference type="GO" id="GO:0033215">
    <property type="term" value="P:reductive iron assimilation"/>
    <property type="evidence" value="ECO:0007669"/>
    <property type="project" value="TreeGrafter"/>
</dbReference>
<dbReference type="CDD" id="cd06186">
    <property type="entry name" value="NOX_Duox_like_FAD_NADP"/>
    <property type="match status" value="1"/>
</dbReference>
<dbReference type="Gene3D" id="3.40.50.80">
    <property type="entry name" value="Nucleotide-binding domain of ferredoxin-NADP reductase (FNR) module"/>
    <property type="match status" value="1"/>
</dbReference>
<dbReference type="InterPro" id="IPR013112">
    <property type="entry name" value="FAD-bd_8"/>
</dbReference>
<dbReference type="InterPro" id="IPR013130">
    <property type="entry name" value="Fe3_Rdtase_TM_dom"/>
</dbReference>
<dbReference type="InterPro" id="IPR013121">
    <property type="entry name" value="Fe_red_NAD-bd_6"/>
</dbReference>
<dbReference type="InterPro" id="IPR039261">
    <property type="entry name" value="FNR_nucleotide-bd"/>
</dbReference>
<dbReference type="InterPro" id="IPR050369">
    <property type="entry name" value="RBOH/FRE"/>
</dbReference>
<dbReference type="PANTHER" id="PTHR11972:SF198">
    <property type="entry name" value="METALLOREDUCTASE AIM14-RELATED"/>
    <property type="match status" value="1"/>
</dbReference>
<dbReference type="PANTHER" id="PTHR11972">
    <property type="entry name" value="NADPH OXIDASE"/>
    <property type="match status" value="1"/>
</dbReference>
<dbReference type="Pfam" id="PF08022">
    <property type="entry name" value="FAD_binding_8"/>
    <property type="match status" value="1"/>
</dbReference>
<dbReference type="Pfam" id="PF01794">
    <property type="entry name" value="Ferric_reduct"/>
    <property type="match status" value="1"/>
</dbReference>
<dbReference type="Pfam" id="PF08030">
    <property type="entry name" value="NAD_binding_6"/>
    <property type="match status" value="1"/>
</dbReference>
<dbReference type="SFLD" id="SFLDF00463">
    <property type="entry name" value="AIM14"/>
    <property type="match status" value="1"/>
</dbReference>
<dbReference type="SFLD" id="SFLDS00052">
    <property type="entry name" value="Ferric_Reductase_Domain"/>
    <property type="match status" value="1"/>
</dbReference>
<dbReference type="SFLD" id="SFLDG01168">
    <property type="entry name" value="Ferric_reductase_subgroup_(FRE"/>
    <property type="match status" value="1"/>
</dbReference>
<name>AIM14_YEAS2</name>
<organism>
    <name type="scientific">Saccharomyces cerevisiae (strain JAY291)</name>
    <name type="common">Baker's yeast</name>
    <dbReference type="NCBI Taxonomy" id="574961"/>
    <lineage>
        <taxon>Eukaryota</taxon>
        <taxon>Fungi</taxon>
        <taxon>Dikarya</taxon>
        <taxon>Ascomycota</taxon>
        <taxon>Saccharomycotina</taxon>
        <taxon>Saccharomycetes</taxon>
        <taxon>Saccharomycetales</taxon>
        <taxon>Saccharomycetaceae</taxon>
        <taxon>Saccharomyces</taxon>
    </lineage>
</organism>
<proteinExistence type="inferred from homology"/>
<evidence type="ECO:0000250" key="1"/>
<evidence type="ECO:0000255" key="2"/>
<evidence type="ECO:0000256" key="3">
    <source>
        <dbReference type="SAM" id="MobiDB-lite"/>
    </source>
</evidence>
<evidence type="ECO:0000305" key="4"/>
<accession>C7GPP6</accession>
<gene>
    <name type="primary">AIM14</name>
    <name type="ORF">C1Q_02267</name>
</gene>
<reference key="1">
    <citation type="journal article" date="2009" name="Genome Res.">
        <title>Genome structure of a Saccharomyces cerevisiae strain widely used in bioethanol production.</title>
        <authorList>
            <person name="Argueso J.L."/>
            <person name="Carazzolle M.F."/>
            <person name="Mieczkowski P.A."/>
            <person name="Duarte F.M."/>
            <person name="Netto O.V.C."/>
            <person name="Missawa S.K."/>
            <person name="Galzerani F."/>
            <person name="Costa G.G.L."/>
            <person name="Vidal R.O."/>
            <person name="Noronha M.F."/>
            <person name="Dominska M."/>
            <person name="Andrietta M.G.S."/>
            <person name="Andrietta S.R."/>
            <person name="Cunha A.F."/>
            <person name="Gomes L.H."/>
            <person name="Tavares F.C.A."/>
            <person name="Alcarde A.R."/>
            <person name="Dietrich F.S."/>
            <person name="McCusker J.H."/>
            <person name="Petes T.D."/>
            <person name="Pereira G.A.G."/>
        </authorList>
    </citation>
    <scope>NUCLEOTIDE SEQUENCE [LARGE SCALE GENOMIC DNA]</scope>
    <source>
        <strain>JAY291</strain>
    </source>
</reference>